<protein>
    <recommendedName>
        <fullName>Probable mitochondrial pyruvate carrier 2</fullName>
        <shortName>MPC2</shortName>
    </recommendedName>
</protein>
<name>MPC2_CAEEL</name>
<gene>
    <name evidence="4" type="primary">mpc-2</name>
    <name evidence="4" type="ORF">F53F10.3</name>
</gene>
<proteinExistence type="inferred from homology"/>
<evidence type="ECO:0000250" key="1">
    <source>
        <dbReference type="UniProtKB" id="P38857"/>
    </source>
</evidence>
<evidence type="ECO:0000255" key="2"/>
<evidence type="ECO:0000305" key="3"/>
<evidence type="ECO:0000312" key="4">
    <source>
        <dbReference type="WormBase" id="F53F10.3"/>
    </source>
</evidence>
<keyword id="KW-0472">Membrane</keyword>
<keyword id="KW-0496">Mitochondrion</keyword>
<keyword id="KW-0999">Mitochondrion inner membrane</keyword>
<keyword id="KW-1185">Reference proteome</keyword>
<keyword id="KW-0812">Transmembrane</keyword>
<keyword id="KW-1133">Transmembrane helix</keyword>
<keyword id="KW-0813">Transport</keyword>
<feature type="chain" id="PRO_0000212803" description="Probable mitochondrial pyruvate carrier 2">
    <location>
        <begin position="1"/>
        <end position="133"/>
    </location>
</feature>
<feature type="transmembrane region" description="Helical" evidence="2">
    <location>
        <begin position="40"/>
        <end position="57"/>
    </location>
</feature>
<feature type="transmembrane region" description="Helical" evidence="2">
    <location>
        <begin position="73"/>
        <end position="91"/>
    </location>
</feature>
<feature type="transmembrane region" description="Helical" evidence="2">
    <location>
        <begin position="100"/>
        <end position="116"/>
    </location>
</feature>
<comment type="function">
    <text evidence="1">May mediate the uptake of pyruvate into mitochondria.</text>
</comment>
<comment type="subcellular location">
    <subcellularLocation>
        <location evidence="1">Mitochondrion inner membrane</location>
        <topology>Multi-pass membrane protein</topology>
    </subcellularLocation>
</comment>
<comment type="similarity">
    <text evidence="3">Belongs to the mitochondrial pyruvate carrier (MPC) (TC 2.A.105) family.</text>
</comment>
<accession>O01578</accession>
<organism>
    <name type="scientific">Caenorhabditis elegans</name>
    <dbReference type="NCBI Taxonomy" id="6239"/>
    <lineage>
        <taxon>Eukaryota</taxon>
        <taxon>Metazoa</taxon>
        <taxon>Ecdysozoa</taxon>
        <taxon>Nematoda</taxon>
        <taxon>Chromadorea</taxon>
        <taxon>Rhabditida</taxon>
        <taxon>Rhabditina</taxon>
        <taxon>Rhabditomorpha</taxon>
        <taxon>Rhabditoidea</taxon>
        <taxon>Rhabditidae</taxon>
        <taxon>Peloderinae</taxon>
        <taxon>Caenorhabditis</taxon>
    </lineage>
</organism>
<reference key="1">
    <citation type="journal article" date="1998" name="Science">
        <title>Genome sequence of the nematode C. elegans: a platform for investigating biology.</title>
        <authorList>
            <consortium name="The C. elegans sequencing consortium"/>
        </authorList>
    </citation>
    <scope>NUCLEOTIDE SEQUENCE [LARGE SCALE GENOMIC DNA]</scope>
    <source>
        <strain>Bristol N2</strain>
    </source>
</reference>
<dbReference type="EMBL" id="FO080750">
    <property type="protein sequence ID" value="CCD66421.1"/>
    <property type="molecule type" value="Genomic_DNA"/>
</dbReference>
<dbReference type="PIR" id="T25797">
    <property type="entry name" value="T25797"/>
</dbReference>
<dbReference type="RefSeq" id="NP_491234.1">
    <property type="nucleotide sequence ID" value="NM_058833.8"/>
</dbReference>
<dbReference type="SMR" id="O01578"/>
<dbReference type="BioGRID" id="37431">
    <property type="interactions" value="18"/>
</dbReference>
<dbReference type="FunCoup" id="O01578">
    <property type="interactions" value="773"/>
</dbReference>
<dbReference type="STRING" id="6239.F53F10.3.1"/>
<dbReference type="PaxDb" id="6239-F53F10.3.2"/>
<dbReference type="PeptideAtlas" id="O01578"/>
<dbReference type="EnsemblMetazoa" id="F53F10.3.1">
    <property type="protein sequence ID" value="F53F10.3.1"/>
    <property type="gene ID" value="WBGene00018765"/>
</dbReference>
<dbReference type="GeneID" id="171957"/>
<dbReference type="KEGG" id="cel:CELE_F53F10.3"/>
<dbReference type="UCSC" id="F53F10.3">
    <property type="organism name" value="c. elegans"/>
</dbReference>
<dbReference type="AGR" id="WB:WBGene00018765"/>
<dbReference type="CTD" id="171957"/>
<dbReference type="WormBase" id="F53F10.3">
    <property type="protein sequence ID" value="CE28447"/>
    <property type="gene ID" value="WBGene00018765"/>
    <property type="gene designation" value="mpc-2"/>
</dbReference>
<dbReference type="eggNOG" id="KOG1589">
    <property type="taxonomic scope" value="Eukaryota"/>
</dbReference>
<dbReference type="GeneTree" id="ENSGT00510000047120"/>
<dbReference type="HOGENOM" id="CLU_099502_4_1_1"/>
<dbReference type="InParanoid" id="O01578"/>
<dbReference type="OMA" id="ITPRVYS"/>
<dbReference type="OrthoDB" id="869189at2759"/>
<dbReference type="PhylomeDB" id="O01578"/>
<dbReference type="PRO" id="PR:O01578"/>
<dbReference type="Proteomes" id="UP000001940">
    <property type="component" value="Chromosome I"/>
</dbReference>
<dbReference type="Bgee" id="WBGene00018765">
    <property type="expression patterns" value="Expressed in adult organism and 4 other cell types or tissues"/>
</dbReference>
<dbReference type="GO" id="GO:0005743">
    <property type="term" value="C:mitochondrial inner membrane"/>
    <property type="evidence" value="ECO:0000318"/>
    <property type="project" value="GO_Central"/>
</dbReference>
<dbReference type="GO" id="GO:0050833">
    <property type="term" value="F:pyruvate transmembrane transporter activity"/>
    <property type="evidence" value="ECO:0000318"/>
    <property type="project" value="GO_Central"/>
</dbReference>
<dbReference type="GO" id="GO:0006850">
    <property type="term" value="P:mitochondrial pyruvate transmembrane transport"/>
    <property type="evidence" value="ECO:0000318"/>
    <property type="project" value="GO_Central"/>
</dbReference>
<dbReference type="InterPro" id="IPR005336">
    <property type="entry name" value="MPC"/>
</dbReference>
<dbReference type="PANTHER" id="PTHR14154">
    <property type="entry name" value="UPF0041 BRAIN PROTEIN 44-RELATED"/>
    <property type="match status" value="1"/>
</dbReference>
<dbReference type="Pfam" id="PF03650">
    <property type="entry name" value="MPC"/>
    <property type="match status" value="1"/>
</dbReference>
<sequence length="133" mass="15074">MGPHRLLYQALCKAGDKFVYPVLPAFAKPAWNHAAGPKTVFFWAPTIKWTLIGAGLADLARPADKLSLYQNSALFATGAIWTRYCLVITPINYYLSSVNFFVMCTGLAQLCRIAHYRYQNPDWETKEIMETHN</sequence>